<proteinExistence type="evidence at transcript level"/>
<feature type="chain" id="PRO_0000064070" description="Probable aquaporin NIP7-1">
    <location>
        <begin position="1"/>
        <end position="275"/>
    </location>
</feature>
<feature type="transmembrane region" description="Helical; Name=1" evidence="3">
    <location>
        <begin position="47"/>
        <end position="67"/>
    </location>
</feature>
<feature type="transmembrane region" description="Helical; Name=2" evidence="3">
    <location>
        <begin position="76"/>
        <end position="96"/>
    </location>
</feature>
<feature type="transmembrane region" description="Helical; Name=3" evidence="3">
    <location>
        <begin position="127"/>
        <end position="147"/>
    </location>
</feature>
<feature type="transmembrane region" description="Helical; Name=4" evidence="3">
    <location>
        <begin position="161"/>
        <end position="181"/>
    </location>
</feature>
<feature type="transmembrane region" description="Helical; Name=5" evidence="3">
    <location>
        <begin position="192"/>
        <end position="212"/>
    </location>
</feature>
<feature type="transmembrane region" description="Helical; Name=6" evidence="3">
    <location>
        <begin position="231"/>
        <end position="251"/>
    </location>
</feature>
<feature type="region of interest" description="Disordered" evidence="4">
    <location>
        <begin position="1"/>
        <end position="26"/>
    </location>
</feature>
<feature type="short sequence motif" description="NPA 1">
    <location>
        <begin position="105"/>
        <end position="107"/>
    </location>
</feature>
<feature type="short sequence motif" description="NPA 2">
    <location>
        <begin position="217"/>
        <end position="219"/>
    </location>
</feature>
<feature type="compositionally biased region" description="Basic and acidic residues" evidence="4">
    <location>
        <begin position="1"/>
        <end position="11"/>
    </location>
</feature>
<feature type="modified residue" description="Phosphoserine" evidence="2">
    <location>
        <position position="272"/>
    </location>
</feature>
<feature type="sequence conflict" description="In Ref. 3; AAM65333." evidence="6" ref="3">
    <original>L</original>
    <variation>F</variation>
    <location>
        <position position="273"/>
    </location>
</feature>
<organism>
    <name type="scientific">Arabidopsis thaliana</name>
    <name type="common">Mouse-ear cress</name>
    <dbReference type="NCBI Taxonomy" id="3702"/>
    <lineage>
        <taxon>Eukaryota</taxon>
        <taxon>Viridiplantae</taxon>
        <taxon>Streptophyta</taxon>
        <taxon>Embryophyta</taxon>
        <taxon>Tracheophyta</taxon>
        <taxon>Spermatophyta</taxon>
        <taxon>Magnoliopsida</taxon>
        <taxon>eudicotyledons</taxon>
        <taxon>Gunneridae</taxon>
        <taxon>Pentapetalae</taxon>
        <taxon>rosids</taxon>
        <taxon>malvids</taxon>
        <taxon>Brassicales</taxon>
        <taxon>Brassicaceae</taxon>
        <taxon>Camelineae</taxon>
        <taxon>Arabidopsis</taxon>
    </lineage>
</organism>
<keyword id="KW-0472">Membrane</keyword>
<keyword id="KW-0597">Phosphoprotein</keyword>
<keyword id="KW-1185">Reference proteome</keyword>
<keyword id="KW-0677">Repeat</keyword>
<keyword id="KW-0812">Transmembrane</keyword>
<keyword id="KW-1133">Transmembrane helix</keyword>
<keyword id="KW-0813">Transport</keyword>
<protein>
    <recommendedName>
        <fullName>Probable aquaporin NIP7-1</fullName>
    </recommendedName>
    <alternativeName>
        <fullName>NOD26-like intrinsic protein 7-1</fullName>
        <shortName>AtNIP7;1</shortName>
    </alternativeName>
</protein>
<evidence type="ECO:0000250" key="1"/>
<evidence type="ECO:0000250" key="2">
    <source>
        <dbReference type="UniProtKB" id="P43286"/>
    </source>
</evidence>
<evidence type="ECO:0000255" key="3"/>
<evidence type="ECO:0000256" key="4">
    <source>
        <dbReference type="SAM" id="MobiDB-lite"/>
    </source>
</evidence>
<evidence type="ECO:0000269" key="5">
    <source>
    </source>
</evidence>
<evidence type="ECO:0000305" key="6"/>
<name>NIP71_ARATH</name>
<gene>
    <name type="primary">NIP7-1</name>
    <name type="ordered locus">At3g06100</name>
    <name type="ORF">F28L1.3</name>
</gene>
<sequence>MNGEARSRVVDQEAGSTPSTLRDEDHPSRQRLFGCLPYDIDLNPLRIVMAELVGTFILMFSVCGVISSTQLSGGHVGLLEYAVTAGLSVVVVVYSIGHISGAHLNPSITIAFAVFGGFPWSQVPLYITAQTLGATAATLVGVSVYGVNADIMATKPALSCVSAFFVELIATSIVVFLASALHCGPHQNLGNLTGFVIGTVISLGVLITGPISGGSMNPARSLGPAVVAWDFEDLWIYMTAPVIGAIIGVLTYRSISLKTRPCPSPVSPSVSSLLR</sequence>
<dbReference type="EMBL" id="AC018907">
    <property type="protein sequence ID" value="AAF30303.1"/>
    <property type="status" value="ALT_SEQ"/>
    <property type="molecule type" value="Genomic_DNA"/>
</dbReference>
<dbReference type="EMBL" id="CP002686">
    <property type="protein sequence ID" value="AEE74343.1"/>
    <property type="molecule type" value="Genomic_DNA"/>
</dbReference>
<dbReference type="EMBL" id="DQ446638">
    <property type="protein sequence ID" value="ABE65919.1"/>
    <property type="molecule type" value="mRNA"/>
</dbReference>
<dbReference type="EMBL" id="DQ653067">
    <property type="protein sequence ID" value="ABK28544.1"/>
    <property type="status" value="ALT_SEQ"/>
    <property type="molecule type" value="mRNA"/>
</dbReference>
<dbReference type="EMBL" id="AY087797">
    <property type="protein sequence ID" value="AAM65333.1"/>
    <property type="molecule type" value="mRNA"/>
</dbReference>
<dbReference type="RefSeq" id="NP_566271.1">
    <property type="nucleotide sequence ID" value="NM_111485.3"/>
</dbReference>
<dbReference type="SMR" id="Q8LAI1"/>
<dbReference type="BioGRID" id="5118">
    <property type="interactions" value="12"/>
</dbReference>
<dbReference type="FunCoup" id="Q8LAI1">
    <property type="interactions" value="40"/>
</dbReference>
<dbReference type="IntAct" id="Q8LAI1">
    <property type="interactions" value="7"/>
</dbReference>
<dbReference type="STRING" id="3702.Q8LAI1"/>
<dbReference type="TCDB" id="1.A.8.12.6">
    <property type="family name" value="the major intrinsic protein (mip) family"/>
</dbReference>
<dbReference type="GlyGen" id="Q8LAI1">
    <property type="glycosylation" value="1 site"/>
</dbReference>
<dbReference type="PaxDb" id="3702-AT3G06100.1"/>
<dbReference type="EnsemblPlants" id="AT3G06100.1">
    <property type="protein sequence ID" value="AT3G06100.1"/>
    <property type="gene ID" value="AT3G06100"/>
</dbReference>
<dbReference type="GeneID" id="819783"/>
<dbReference type="Gramene" id="AT3G06100.1">
    <property type="protein sequence ID" value="AT3G06100.1"/>
    <property type="gene ID" value="AT3G06100"/>
</dbReference>
<dbReference type="KEGG" id="ath:AT3G06100"/>
<dbReference type="Araport" id="AT3G06100"/>
<dbReference type="TAIR" id="AT3G06100">
    <property type="gene designation" value="NIP7"/>
</dbReference>
<dbReference type="eggNOG" id="KOG0223">
    <property type="taxonomic scope" value="Eukaryota"/>
</dbReference>
<dbReference type="HOGENOM" id="CLU_020019_3_1_1"/>
<dbReference type="InParanoid" id="Q8LAI1"/>
<dbReference type="OrthoDB" id="3222at2759"/>
<dbReference type="PhylomeDB" id="Q8LAI1"/>
<dbReference type="PRO" id="PR:Q8LAI1"/>
<dbReference type="Proteomes" id="UP000006548">
    <property type="component" value="Chromosome 3"/>
</dbReference>
<dbReference type="ExpressionAtlas" id="Q8LAI1">
    <property type="expression patterns" value="baseline and differential"/>
</dbReference>
<dbReference type="GO" id="GO:0016020">
    <property type="term" value="C:membrane"/>
    <property type="evidence" value="ECO:0007669"/>
    <property type="project" value="UniProtKB-SubCell"/>
</dbReference>
<dbReference type="GO" id="GO:0046715">
    <property type="term" value="F:active borate transmembrane transporter activity"/>
    <property type="evidence" value="ECO:0000314"/>
    <property type="project" value="TAIR"/>
</dbReference>
<dbReference type="GO" id="GO:0015267">
    <property type="term" value="F:channel activity"/>
    <property type="evidence" value="ECO:0007669"/>
    <property type="project" value="InterPro"/>
</dbReference>
<dbReference type="GO" id="GO:0035445">
    <property type="term" value="P:borate transmembrane transport"/>
    <property type="evidence" value="ECO:0000314"/>
    <property type="project" value="TAIR"/>
</dbReference>
<dbReference type="CDD" id="cd00333">
    <property type="entry name" value="MIP"/>
    <property type="match status" value="1"/>
</dbReference>
<dbReference type="FunFam" id="1.20.1080.10:FF:000013">
    <property type="entry name" value="Aquaporin NIP2-1"/>
    <property type="match status" value="1"/>
</dbReference>
<dbReference type="Gene3D" id="1.20.1080.10">
    <property type="entry name" value="Glycerol uptake facilitator protein"/>
    <property type="match status" value="1"/>
</dbReference>
<dbReference type="InterPro" id="IPR023271">
    <property type="entry name" value="Aquaporin-like"/>
</dbReference>
<dbReference type="InterPro" id="IPR034294">
    <property type="entry name" value="Aquaporin_transptr"/>
</dbReference>
<dbReference type="InterPro" id="IPR000425">
    <property type="entry name" value="MIP"/>
</dbReference>
<dbReference type="InterPro" id="IPR022357">
    <property type="entry name" value="MIP_CS"/>
</dbReference>
<dbReference type="PANTHER" id="PTHR45724">
    <property type="entry name" value="AQUAPORIN NIP2-1"/>
    <property type="match status" value="1"/>
</dbReference>
<dbReference type="PANTHER" id="PTHR45724:SF26">
    <property type="entry name" value="AQUAPORIN NIP7-1-RELATED"/>
    <property type="match status" value="1"/>
</dbReference>
<dbReference type="Pfam" id="PF00230">
    <property type="entry name" value="MIP"/>
    <property type="match status" value="1"/>
</dbReference>
<dbReference type="PRINTS" id="PR00783">
    <property type="entry name" value="MINTRINSICP"/>
</dbReference>
<dbReference type="SUPFAM" id="SSF81338">
    <property type="entry name" value="Aquaporin-like"/>
    <property type="match status" value="1"/>
</dbReference>
<dbReference type="PROSITE" id="PS00221">
    <property type="entry name" value="MIP"/>
    <property type="match status" value="1"/>
</dbReference>
<accession>Q8LAI1</accession>
<accession>A0MEU4</accession>
<accession>Q1PES9</accession>
<accession>Q9M8K8</accession>
<reference key="1">
    <citation type="journal article" date="2000" name="Nature">
        <title>Sequence and analysis of chromosome 3 of the plant Arabidopsis thaliana.</title>
        <authorList>
            <person name="Salanoubat M."/>
            <person name="Lemcke K."/>
            <person name="Rieger M."/>
            <person name="Ansorge W."/>
            <person name="Unseld M."/>
            <person name="Fartmann B."/>
            <person name="Valle G."/>
            <person name="Bloecker H."/>
            <person name="Perez-Alonso M."/>
            <person name="Obermaier B."/>
            <person name="Delseny M."/>
            <person name="Boutry M."/>
            <person name="Grivell L.A."/>
            <person name="Mache R."/>
            <person name="Puigdomenech P."/>
            <person name="De Simone V."/>
            <person name="Choisne N."/>
            <person name="Artiguenave F."/>
            <person name="Robert C."/>
            <person name="Brottier P."/>
            <person name="Wincker P."/>
            <person name="Cattolico L."/>
            <person name="Weissenbach J."/>
            <person name="Saurin W."/>
            <person name="Quetier F."/>
            <person name="Schaefer M."/>
            <person name="Mueller-Auer S."/>
            <person name="Gabel C."/>
            <person name="Fuchs M."/>
            <person name="Benes V."/>
            <person name="Wurmbach E."/>
            <person name="Drzonek H."/>
            <person name="Erfle H."/>
            <person name="Jordan N."/>
            <person name="Bangert S."/>
            <person name="Wiedelmann R."/>
            <person name="Kranz H."/>
            <person name="Voss H."/>
            <person name="Holland R."/>
            <person name="Brandt P."/>
            <person name="Nyakatura G."/>
            <person name="Vezzi A."/>
            <person name="D'Angelo M."/>
            <person name="Pallavicini A."/>
            <person name="Toppo S."/>
            <person name="Simionati B."/>
            <person name="Conrad A."/>
            <person name="Hornischer K."/>
            <person name="Kauer G."/>
            <person name="Loehnert T.-H."/>
            <person name="Nordsiek G."/>
            <person name="Reichelt J."/>
            <person name="Scharfe M."/>
            <person name="Schoen O."/>
            <person name="Bargues M."/>
            <person name="Terol J."/>
            <person name="Climent J."/>
            <person name="Navarro P."/>
            <person name="Collado C."/>
            <person name="Perez-Perez A."/>
            <person name="Ottenwaelder B."/>
            <person name="Duchemin D."/>
            <person name="Cooke R."/>
            <person name="Laudie M."/>
            <person name="Berger-Llauro C."/>
            <person name="Purnelle B."/>
            <person name="Masuy D."/>
            <person name="de Haan M."/>
            <person name="Maarse A.C."/>
            <person name="Alcaraz J.-P."/>
            <person name="Cottet A."/>
            <person name="Casacuberta E."/>
            <person name="Monfort A."/>
            <person name="Argiriou A."/>
            <person name="Flores M."/>
            <person name="Liguori R."/>
            <person name="Vitale D."/>
            <person name="Mannhaupt G."/>
            <person name="Haase D."/>
            <person name="Schoof H."/>
            <person name="Rudd S."/>
            <person name="Zaccaria P."/>
            <person name="Mewes H.-W."/>
            <person name="Mayer K.F.X."/>
            <person name="Kaul S."/>
            <person name="Town C.D."/>
            <person name="Koo H.L."/>
            <person name="Tallon L.J."/>
            <person name="Jenkins J."/>
            <person name="Rooney T."/>
            <person name="Rizzo M."/>
            <person name="Walts A."/>
            <person name="Utterback T."/>
            <person name="Fujii C.Y."/>
            <person name="Shea T.P."/>
            <person name="Creasy T.H."/>
            <person name="Haas B."/>
            <person name="Maiti R."/>
            <person name="Wu D."/>
            <person name="Peterson J."/>
            <person name="Van Aken S."/>
            <person name="Pai G."/>
            <person name="Militscher J."/>
            <person name="Sellers P."/>
            <person name="Gill J.E."/>
            <person name="Feldblyum T.V."/>
            <person name="Preuss D."/>
            <person name="Lin X."/>
            <person name="Nierman W.C."/>
            <person name="Salzberg S.L."/>
            <person name="White O."/>
            <person name="Venter J.C."/>
            <person name="Fraser C.M."/>
            <person name="Kaneko T."/>
            <person name="Nakamura Y."/>
            <person name="Sato S."/>
            <person name="Kato T."/>
            <person name="Asamizu E."/>
            <person name="Sasamoto S."/>
            <person name="Kimura T."/>
            <person name="Idesawa K."/>
            <person name="Kawashima K."/>
            <person name="Kishida Y."/>
            <person name="Kiyokawa C."/>
            <person name="Kohara M."/>
            <person name="Matsumoto M."/>
            <person name="Matsuno A."/>
            <person name="Muraki A."/>
            <person name="Nakayama S."/>
            <person name="Nakazaki N."/>
            <person name="Shinpo S."/>
            <person name="Takeuchi C."/>
            <person name="Wada T."/>
            <person name="Watanabe A."/>
            <person name="Yamada M."/>
            <person name="Yasuda M."/>
            <person name="Tabata S."/>
        </authorList>
    </citation>
    <scope>NUCLEOTIDE SEQUENCE [LARGE SCALE GENOMIC DNA]</scope>
    <source>
        <strain>cv. Columbia</strain>
    </source>
</reference>
<reference key="2">
    <citation type="journal article" date="2017" name="Plant J.">
        <title>Araport11: a complete reannotation of the Arabidopsis thaliana reference genome.</title>
        <authorList>
            <person name="Cheng C.Y."/>
            <person name="Krishnakumar V."/>
            <person name="Chan A.P."/>
            <person name="Thibaud-Nissen F."/>
            <person name="Schobel S."/>
            <person name="Town C.D."/>
        </authorList>
    </citation>
    <scope>GENOME REANNOTATION</scope>
    <source>
        <strain>cv. Columbia</strain>
    </source>
</reference>
<reference key="3">
    <citation type="journal article" date="2006" name="Plant Biotechnol. J.">
        <title>Simultaneous high-throughput recombinational cloning of open reading frames in closed and open configurations.</title>
        <authorList>
            <person name="Underwood B.A."/>
            <person name="Vanderhaeghen R."/>
            <person name="Whitford R."/>
            <person name="Town C.D."/>
            <person name="Hilson P."/>
        </authorList>
    </citation>
    <scope>NUCLEOTIDE SEQUENCE [LARGE SCALE MRNA]</scope>
    <source>
        <strain>cv. Columbia</strain>
    </source>
</reference>
<reference key="4">
    <citation type="submission" date="2002-03" db="EMBL/GenBank/DDBJ databases">
        <title>Full-length cDNA from Arabidopsis thaliana.</title>
        <authorList>
            <person name="Brover V.V."/>
            <person name="Troukhan M.E."/>
            <person name="Alexandrov N.A."/>
            <person name="Lu Y.-P."/>
            <person name="Flavell R.B."/>
            <person name="Feldmann K.A."/>
        </authorList>
    </citation>
    <scope>NUCLEOTIDE SEQUENCE [LARGE SCALE MRNA]</scope>
</reference>
<reference key="5">
    <citation type="journal article" date="2002" name="Genome Biol.">
        <title>From genome to function: the Arabidopsis aquaporins.</title>
        <authorList>
            <person name="Quigley F."/>
            <person name="Rosenberg J.M."/>
            <person name="Shachar-Hill Y."/>
            <person name="Bohnert H.J."/>
        </authorList>
    </citation>
    <scope>NOMENCLATURE</scope>
    <scope>TISSUE SPECIFICITY</scope>
</reference>
<comment type="function">
    <text evidence="1">Aquaporins facilitate the transport of water and small neutral solutes across cell membranes.</text>
</comment>
<comment type="subcellular location">
    <subcellularLocation>
        <location evidence="6">Membrane</location>
        <topology evidence="6">Multi-pass membrane protein</topology>
    </subcellularLocation>
</comment>
<comment type="tissue specificity">
    <text evidence="5">Expressed in floral buds.</text>
</comment>
<comment type="domain">
    <text>Aquaporins contain two tandem repeats each containing three membrane-spanning domains and a pore-forming loop with the signature motif Asn-Pro-Ala/Ser (NPA).</text>
</comment>
<comment type="similarity">
    <text evidence="6">Belongs to the MIP/aquaporin (TC 1.A.8) family. NIP (TC 1.A.8.12) subfamily.</text>
</comment>
<comment type="sequence caution" evidence="6">
    <conflict type="erroneous gene model prediction">
        <sequence resource="EMBL-CDS" id="AAF30303"/>
    </conflict>
</comment>
<comment type="sequence caution" evidence="6">
    <conflict type="erroneous termination">
        <sequence resource="EMBL-CDS" id="ABK28544"/>
    </conflict>
    <text>Extended C-terminus.</text>
</comment>